<organism>
    <name type="scientific">Mus musculus</name>
    <name type="common">Mouse</name>
    <dbReference type="NCBI Taxonomy" id="10090"/>
    <lineage>
        <taxon>Eukaryota</taxon>
        <taxon>Metazoa</taxon>
        <taxon>Chordata</taxon>
        <taxon>Craniata</taxon>
        <taxon>Vertebrata</taxon>
        <taxon>Euteleostomi</taxon>
        <taxon>Mammalia</taxon>
        <taxon>Eutheria</taxon>
        <taxon>Euarchontoglires</taxon>
        <taxon>Glires</taxon>
        <taxon>Rodentia</taxon>
        <taxon>Myomorpha</taxon>
        <taxon>Muroidea</taxon>
        <taxon>Muridae</taxon>
        <taxon>Murinae</taxon>
        <taxon>Mus</taxon>
        <taxon>Mus</taxon>
    </lineage>
</organism>
<keyword id="KW-0007">Acetylation</keyword>
<keyword id="KW-0440">LIM domain</keyword>
<keyword id="KW-0479">Metal-binding</keyword>
<keyword id="KW-0597">Phosphoprotein</keyword>
<keyword id="KW-1185">Reference proteome</keyword>
<keyword id="KW-0677">Repeat</keyword>
<keyword id="KW-0862">Zinc</keyword>
<reference key="1">
    <citation type="journal article" date="2002" name="Mech. Dev.">
        <title>The heart LIM protein gene (Hlp), expressed in the developing and adult heart, defines a new tissue-specific LIM-only protein family.</title>
        <authorList>
            <person name="Yu T.S."/>
            <person name="Moctezuma-Anaya M."/>
            <person name="Kubo A."/>
            <person name="Keller G."/>
            <person name="Robertson S."/>
        </authorList>
    </citation>
    <scope>NUCLEOTIDE SEQUENCE [GENOMIC DNA / MRNA]</scope>
    <scope>DEVELOPMENTAL STAGE</scope>
    <source>
        <strain>129/Sv</strain>
        <tissue>Heart</tissue>
    </source>
</reference>
<reference key="2">
    <citation type="journal article" date="2002" name="Proc. Natl. Acad. Sci. U.S.A.">
        <title>The origin of a developmentally regulated Igh replicon is located near the border of regulatory domains for Igh replication and expression.</title>
        <authorList>
            <person name="Zhou J."/>
            <person name="Ashouian N."/>
            <person name="Delepine M."/>
            <person name="Matsuda F."/>
            <person name="Chevillard C."/>
            <person name="Riblet R."/>
            <person name="Schildkraut C.L."/>
            <person name="Birshtein B.K."/>
        </authorList>
    </citation>
    <scope>NUCLEOTIDE SEQUENCE [GENOMIC DNA]</scope>
    <source>
        <strain>129/Sv</strain>
    </source>
</reference>
<reference key="3">
    <citation type="journal article" date="2005" name="Science">
        <title>The transcriptional landscape of the mammalian genome.</title>
        <authorList>
            <person name="Carninci P."/>
            <person name="Kasukawa T."/>
            <person name="Katayama S."/>
            <person name="Gough J."/>
            <person name="Frith M.C."/>
            <person name="Maeda N."/>
            <person name="Oyama R."/>
            <person name="Ravasi T."/>
            <person name="Lenhard B."/>
            <person name="Wells C."/>
            <person name="Kodzius R."/>
            <person name="Shimokawa K."/>
            <person name="Bajic V.B."/>
            <person name="Brenner S.E."/>
            <person name="Batalov S."/>
            <person name="Forrest A.R."/>
            <person name="Zavolan M."/>
            <person name="Davis M.J."/>
            <person name="Wilming L.G."/>
            <person name="Aidinis V."/>
            <person name="Allen J.E."/>
            <person name="Ambesi-Impiombato A."/>
            <person name="Apweiler R."/>
            <person name="Aturaliya R.N."/>
            <person name="Bailey T.L."/>
            <person name="Bansal M."/>
            <person name="Baxter L."/>
            <person name="Beisel K.W."/>
            <person name="Bersano T."/>
            <person name="Bono H."/>
            <person name="Chalk A.M."/>
            <person name="Chiu K.P."/>
            <person name="Choudhary V."/>
            <person name="Christoffels A."/>
            <person name="Clutterbuck D.R."/>
            <person name="Crowe M.L."/>
            <person name="Dalla E."/>
            <person name="Dalrymple B.P."/>
            <person name="de Bono B."/>
            <person name="Della Gatta G."/>
            <person name="di Bernardo D."/>
            <person name="Down T."/>
            <person name="Engstrom P."/>
            <person name="Fagiolini M."/>
            <person name="Faulkner G."/>
            <person name="Fletcher C.F."/>
            <person name="Fukushima T."/>
            <person name="Furuno M."/>
            <person name="Futaki S."/>
            <person name="Gariboldi M."/>
            <person name="Georgii-Hemming P."/>
            <person name="Gingeras T.R."/>
            <person name="Gojobori T."/>
            <person name="Green R.E."/>
            <person name="Gustincich S."/>
            <person name="Harbers M."/>
            <person name="Hayashi Y."/>
            <person name="Hensch T.K."/>
            <person name="Hirokawa N."/>
            <person name="Hill D."/>
            <person name="Huminiecki L."/>
            <person name="Iacono M."/>
            <person name="Ikeo K."/>
            <person name="Iwama A."/>
            <person name="Ishikawa T."/>
            <person name="Jakt M."/>
            <person name="Kanapin A."/>
            <person name="Katoh M."/>
            <person name="Kawasawa Y."/>
            <person name="Kelso J."/>
            <person name="Kitamura H."/>
            <person name="Kitano H."/>
            <person name="Kollias G."/>
            <person name="Krishnan S.P."/>
            <person name="Kruger A."/>
            <person name="Kummerfeld S.K."/>
            <person name="Kurochkin I.V."/>
            <person name="Lareau L.F."/>
            <person name="Lazarevic D."/>
            <person name="Lipovich L."/>
            <person name="Liu J."/>
            <person name="Liuni S."/>
            <person name="McWilliam S."/>
            <person name="Madan Babu M."/>
            <person name="Madera M."/>
            <person name="Marchionni L."/>
            <person name="Matsuda H."/>
            <person name="Matsuzawa S."/>
            <person name="Miki H."/>
            <person name="Mignone F."/>
            <person name="Miyake S."/>
            <person name="Morris K."/>
            <person name="Mottagui-Tabar S."/>
            <person name="Mulder N."/>
            <person name="Nakano N."/>
            <person name="Nakauchi H."/>
            <person name="Ng P."/>
            <person name="Nilsson R."/>
            <person name="Nishiguchi S."/>
            <person name="Nishikawa S."/>
            <person name="Nori F."/>
            <person name="Ohara O."/>
            <person name="Okazaki Y."/>
            <person name="Orlando V."/>
            <person name="Pang K.C."/>
            <person name="Pavan W.J."/>
            <person name="Pavesi G."/>
            <person name="Pesole G."/>
            <person name="Petrovsky N."/>
            <person name="Piazza S."/>
            <person name="Reed J."/>
            <person name="Reid J.F."/>
            <person name="Ring B.Z."/>
            <person name="Ringwald M."/>
            <person name="Rost B."/>
            <person name="Ruan Y."/>
            <person name="Salzberg S.L."/>
            <person name="Sandelin A."/>
            <person name="Schneider C."/>
            <person name="Schoenbach C."/>
            <person name="Sekiguchi K."/>
            <person name="Semple C.A."/>
            <person name="Seno S."/>
            <person name="Sessa L."/>
            <person name="Sheng Y."/>
            <person name="Shibata Y."/>
            <person name="Shimada H."/>
            <person name="Shimada K."/>
            <person name="Silva D."/>
            <person name="Sinclair B."/>
            <person name="Sperling S."/>
            <person name="Stupka E."/>
            <person name="Sugiura K."/>
            <person name="Sultana R."/>
            <person name="Takenaka Y."/>
            <person name="Taki K."/>
            <person name="Tammoja K."/>
            <person name="Tan S.L."/>
            <person name="Tang S."/>
            <person name="Taylor M.S."/>
            <person name="Tegner J."/>
            <person name="Teichmann S.A."/>
            <person name="Ueda H.R."/>
            <person name="van Nimwegen E."/>
            <person name="Verardo R."/>
            <person name="Wei C.L."/>
            <person name="Yagi K."/>
            <person name="Yamanishi H."/>
            <person name="Zabarovsky E."/>
            <person name="Zhu S."/>
            <person name="Zimmer A."/>
            <person name="Hide W."/>
            <person name="Bult C."/>
            <person name="Grimmond S.M."/>
            <person name="Teasdale R.D."/>
            <person name="Liu E.T."/>
            <person name="Brusic V."/>
            <person name="Quackenbush J."/>
            <person name="Wahlestedt C."/>
            <person name="Mattick J.S."/>
            <person name="Hume D.A."/>
            <person name="Kai C."/>
            <person name="Sasaki D."/>
            <person name="Tomaru Y."/>
            <person name="Fukuda S."/>
            <person name="Kanamori-Katayama M."/>
            <person name="Suzuki M."/>
            <person name="Aoki J."/>
            <person name="Arakawa T."/>
            <person name="Iida J."/>
            <person name="Imamura K."/>
            <person name="Itoh M."/>
            <person name="Kato T."/>
            <person name="Kawaji H."/>
            <person name="Kawagashira N."/>
            <person name="Kawashima T."/>
            <person name="Kojima M."/>
            <person name="Kondo S."/>
            <person name="Konno H."/>
            <person name="Nakano K."/>
            <person name="Ninomiya N."/>
            <person name="Nishio T."/>
            <person name="Okada M."/>
            <person name="Plessy C."/>
            <person name="Shibata K."/>
            <person name="Shiraki T."/>
            <person name="Suzuki S."/>
            <person name="Tagami M."/>
            <person name="Waki K."/>
            <person name="Watahiki A."/>
            <person name="Okamura-Oho Y."/>
            <person name="Suzuki H."/>
            <person name="Kawai J."/>
            <person name="Hayashizaki Y."/>
        </authorList>
    </citation>
    <scope>NUCLEOTIDE SEQUENCE [LARGE SCALE MRNA]</scope>
    <source>
        <strain>C57BL/6J</strain>
        <tissue>Kidney</tissue>
    </source>
</reference>
<reference key="4">
    <citation type="journal article" date="2004" name="Genome Res.">
        <title>The status, quality, and expansion of the NIH full-length cDNA project: the Mammalian Gene Collection (MGC).</title>
        <authorList>
            <consortium name="The MGC Project Team"/>
        </authorList>
    </citation>
    <scope>NUCLEOTIDE SEQUENCE [LARGE SCALE MRNA]</scope>
</reference>
<reference key="5">
    <citation type="journal article" date="2005" name="J. Cell Sci.">
        <title>Uni-axial stretching regulates intracellular localization of Hic-5 expressed in smooth-muscle cells in vivo.</title>
        <authorList>
            <person name="Kim-Kaneyama J.-R."/>
            <person name="Suzuki W."/>
            <person name="Ichikawa K."/>
            <person name="Ohki T."/>
            <person name="Kohno Y."/>
            <person name="Sata M."/>
            <person name="Nose K."/>
            <person name="Shibanuma M."/>
        </authorList>
    </citation>
    <scope>INTERACTION WITH TGFB1I1</scope>
</reference>
<reference key="6">
    <citation type="journal article" date="2010" name="Cell">
        <title>A tissue-specific atlas of mouse protein phosphorylation and expression.</title>
        <authorList>
            <person name="Huttlin E.L."/>
            <person name="Jedrychowski M.P."/>
            <person name="Elias J.E."/>
            <person name="Goswami T."/>
            <person name="Rad R."/>
            <person name="Beausoleil S.A."/>
            <person name="Villen J."/>
            <person name="Haas W."/>
            <person name="Sowa M.E."/>
            <person name="Gygi S.P."/>
        </authorList>
    </citation>
    <scope>IDENTIFICATION BY MASS SPECTROMETRY [LARGE SCALE ANALYSIS]</scope>
    <source>
        <tissue>Brain</tissue>
        <tissue>Brown adipose tissue</tissue>
        <tissue>Heart</tissue>
        <tissue>Kidney</tissue>
        <tissue>Liver</tissue>
        <tissue>Lung</tissue>
        <tissue>Pancreas</tissue>
        <tissue>Spleen</tissue>
        <tissue>Testis</tissue>
    </source>
</reference>
<reference key="7">
    <citation type="journal article" date="2013" name="Mol. Cell">
        <title>SIRT5-mediated lysine desuccinylation impacts diverse metabolic pathways.</title>
        <authorList>
            <person name="Park J."/>
            <person name="Chen Y."/>
            <person name="Tishkoff D.X."/>
            <person name="Peng C."/>
            <person name="Tan M."/>
            <person name="Dai L."/>
            <person name="Xie Z."/>
            <person name="Zhang Y."/>
            <person name="Zwaans B.M."/>
            <person name="Skinner M.E."/>
            <person name="Lombard D.B."/>
            <person name="Zhao Y."/>
        </authorList>
    </citation>
    <scope>ACETYLATION [LARGE SCALE ANALYSIS] AT LYS-23; LYS-138 AND LYS-144</scope>
    <scope>IDENTIFICATION BY MASS SPECTROMETRY [LARGE SCALE ANALYSIS]</scope>
    <source>
        <tissue>Embryonic fibroblast</tissue>
    </source>
</reference>
<sequence length="208" mass="22727">MASKCPKCDKTVYFAEKVSSLGKDWHKFCLKCERCNKTLTPGGHAEHDGKPFCHKPCYATLFGPKGVNIGGAGSYIYEKPQTEAPQVTGPIEVPVVRTEERKTSGPPKGPSKASSVTTFTGEPNMCPRCNKRVYFAEKVTSLGKDWHRPCLRCERCSKTLTPGGHAEHDGQPYCHKPCYGILFGPKGVNTGAVGSYIYDKDPEGTVQP</sequence>
<name>CRIP2_MOUSE</name>
<proteinExistence type="evidence at protein level"/>
<protein>
    <recommendedName>
        <fullName>Cysteine-rich protein 2</fullName>
        <shortName>CRP-2</shortName>
    </recommendedName>
    <alternativeName>
        <fullName>Heart LIM protein</fullName>
    </alternativeName>
</protein>
<comment type="subunit">
    <text evidence="4">Interacts with TGFB1I1.</text>
</comment>
<comment type="developmental stage">
    <text evidence="3">In the embryo, its expression is primarily restricted to the developing heart. In situ hybridization showed expression at 7.75 dpc in the paired heart-forming primordia prior to linear heart-tube formation. At 8.5 dpc, strong expression is detected in the heart, with equal expression in both heart chambers. Expression is detected in both myocardium and endocardium, and in vascular endothelium. Later in fetal development low levels of expression is detected outside the heart, including dorsal root ganglia and the spinal cord. In the adult, it is expressed at highest levels in the heart, and at lower levels in the brain, skeletal muscle and aorta.</text>
</comment>
<accession>Q9DCT8</accession>
<evidence type="ECO:0000250" key="1">
    <source>
        <dbReference type="UniProtKB" id="P52943"/>
    </source>
</evidence>
<evidence type="ECO:0000255" key="2">
    <source>
        <dbReference type="PROSITE-ProRule" id="PRU00125"/>
    </source>
</evidence>
<evidence type="ECO:0000269" key="3">
    <source>
    </source>
</evidence>
<evidence type="ECO:0000269" key="4">
    <source>
    </source>
</evidence>
<evidence type="ECO:0007744" key="5">
    <source>
    </source>
</evidence>
<feature type="chain" id="PRO_0000075711" description="Cysteine-rich protein 2">
    <location>
        <begin position="1"/>
        <end position="208"/>
    </location>
</feature>
<feature type="domain" description="LIM zinc-binding 1" evidence="2">
    <location>
        <begin position="5"/>
        <end position="57"/>
    </location>
</feature>
<feature type="domain" description="LIM zinc-binding 2" evidence="2">
    <location>
        <begin position="126"/>
        <end position="178"/>
    </location>
</feature>
<feature type="modified residue" description="N6-acetyllysine" evidence="5">
    <location>
        <position position="23"/>
    </location>
</feature>
<feature type="modified residue" description="Phosphoserine" evidence="1">
    <location>
        <position position="104"/>
    </location>
</feature>
<feature type="modified residue" description="N6-acetyllysine" evidence="5">
    <location>
        <position position="138"/>
    </location>
</feature>
<feature type="modified residue" description="N6-acetyllysine" evidence="5">
    <location>
        <position position="144"/>
    </location>
</feature>
<gene>
    <name type="primary">Crip2</name>
    <name type="synonym">Crp2</name>
    <name type="synonym">Hlp</name>
</gene>
<dbReference type="EMBL" id="AF469648">
    <property type="protein sequence ID" value="AAM89218.1"/>
    <property type="molecule type" value="mRNA"/>
</dbReference>
<dbReference type="EMBL" id="AF470625">
    <property type="protein sequence ID" value="AAM89219.1"/>
    <property type="molecule type" value="Genomic_DNA"/>
</dbReference>
<dbReference type="EMBL" id="AF450245">
    <property type="protein sequence ID" value="AAM97586.1"/>
    <property type="molecule type" value="Genomic_DNA"/>
</dbReference>
<dbReference type="EMBL" id="AK002484">
    <property type="protein sequence ID" value="BAB22136.1"/>
    <property type="molecule type" value="mRNA"/>
</dbReference>
<dbReference type="EMBL" id="BC002093">
    <property type="protein sequence ID" value="AAH02093.1"/>
    <property type="molecule type" value="mRNA"/>
</dbReference>
<dbReference type="EMBL" id="BC002096">
    <property type="protein sequence ID" value="AAH02096.1"/>
    <property type="molecule type" value="mRNA"/>
</dbReference>
<dbReference type="CCDS" id="CCDS26204.1"/>
<dbReference type="RefSeq" id="NP_001334372.1">
    <property type="nucleotide sequence ID" value="NM_001347443.1"/>
</dbReference>
<dbReference type="RefSeq" id="NP_077185.1">
    <property type="nucleotide sequence ID" value="NM_024223.2"/>
</dbReference>
<dbReference type="BioGRID" id="212808">
    <property type="interactions" value="6"/>
</dbReference>
<dbReference type="FunCoup" id="Q9DCT8">
    <property type="interactions" value="161"/>
</dbReference>
<dbReference type="IntAct" id="Q9DCT8">
    <property type="interactions" value="2"/>
</dbReference>
<dbReference type="STRING" id="10090.ENSMUSP00000081943"/>
<dbReference type="GlyGen" id="Q9DCT8">
    <property type="glycosylation" value="2 sites, 1 N-linked glycan (1 site), 1 O-linked glycan (1 site)"/>
</dbReference>
<dbReference type="iPTMnet" id="Q9DCT8"/>
<dbReference type="PhosphoSitePlus" id="Q9DCT8"/>
<dbReference type="SwissPalm" id="Q9DCT8"/>
<dbReference type="CPTAC" id="non-CPTAC-3422"/>
<dbReference type="jPOST" id="Q9DCT8"/>
<dbReference type="PaxDb" id="10090-ENSMUSP00000081943"/>
<dbReference type="ProteomicsDB" id="284014"/>
<dbReference type="TopDownProteomics" id="Q9DCT8"/>
<dbReference type="Antibodypedia" id="15064">
    <property type="antibodies" value="214 antibodies from 28 providers"/>
</dbReference>
<dbReference type="DNASU" id="68337"/>
<dbReference type="Ensembl" id="ENSMUST00000084882.9">
    <property type="protein sequence ID" value="ENSMUSP00000081943.5"/>
    <property type="gene ID" value="ENSMUSG00000006356.11"/>
</dbReference>
<dbReference type="GeneID" id="68337"/>
<dbReference type="KEGG" id="mmu:68337"/>
<dbReference type="UCSC" id="uc007pfy.2">
    <property type="organism name" value="mouse"/>
</dbReference>
<dbReference type="AGR" id="MGI:1915587"/>
<dbReference type="CTD" id="1397"/>
<dbReference type="MGI" id="MGI:1915587">
    <property type="gene designation" value="Crip2"/>
</dbReference>
<dbReference type="VEuPathDB" id="HostDB:ENSMUSG00000006356"/>
<dbReference type="eggNOG" id="KOG1700">
    <property type="taxonomic scope" value="Eukaryota"/>
</dbReference>
<dbReference type="GeneTree" id="ENSGT00940000158683"/>
<dbReference type="HOGENOM" id="CLU_054591_2_0_1"/>
<dbReference type="InParanoid" id="Q9DCT8"/>
<dbReference type="OMA" id="YEKPCAE"/>
<dbReference type="OrthoDB" id="1679758at2759"/>
<dbReference type="PhylomeDB" id="Q9DCT8"/>
<dbReference type="TreeFam" id="TF313758"/>
<dbReference type="BioGRID-ORCS" id="68337">
    <property type="hits" value="3 hits in 79 CRISPR screens"/>
</dbReference>
<dbReference type="CD-CODE" id="CE726F99">
    <property type="entry name" value="Postsynaptic density"/>
</dbReference>
<dbReference type="ChiTaRS" id="Crip2">
    <property type="organism name" value="mouse"/>
</dbReference>
<dbReference type="PRO" id="PR:Q9DCT8"/>
<dbReference type="Proteomes" id="UP000000589">
    <property type="component" value="Chromosome 12"/>
</dbReference>
<dbReference type="RNAct" id="Q9DCT8">
    <property type="molecule type" value="protein"/>
</dbReference>
<dbReference type="Bgee" id="ENSMUSG00000006356">
    <property type="expression patterns" value="Expressed in ankle joint and 273 other cell types or tissues"/>
</dbReference>
<dbReference type="ExpressionAtlas" id="Q9DCT8">
    <property type="expression patterns" value="baseline and differential"/>
</dbReference>
<dbReference type="GO" id="GO:0005938">
    <property type="term" value="C:cell cortex"/>
    <property type="evidence" value="ECO:0000314"/>
    <property type="project" value="MGI"/>
</dbReference>
<dbReference type="GO" id="GO:0046872">
    <property type="term" value="F:metal ion binding"/>
    <property type="evidence" value="ECO:0007669"/>
    <property type="project" value="UniProtKB-KW"/>
</dbReference>
<dbReference type="GO" id="GO:0030097">
    <property type="term" value="P:hemopoiesis"/>
    <property type="evidence" value="ECO:0000314"/>
    <property type="project" value="MGI"/>
</dbReference>
<dbReference type="GO" id="GO:0008284">
    <property type="term" value="P:positive regulation of cell population proliferation"/>
    <property type="evidence" value="ECO:0000314"/>
    <property type="project" value="MGI"/>
</dbReference>
<dbReference type="CDD" id="cd09476">
    <property type="entry name" value="LIM1_TLP"/>
    <property type="match status" value="2"/>
</dbReference>
<dbReference type="FunFam" id="2.10.110.10:FF:000025">
    <property type="entry name" value="Cysteine-rich protein 2"/>
    <property type="match status" value="2"/>
</dbReference>
<dbReference type="Gene3D" id="2.10.110.10">
    <property type="entry name" value="Cysteine Rich Protein"/>
    <property type="match status" value="2"/>
</dbReference>
<dbReference type="InterPro" id="IPR001781">
    <property type="entry name" value="Znf_LIM"/>
</dbReference>
<dbReference type="PANTHER" id="PTHR46074:SF2">
    <property type="entry name" value="CYSTEINE-RICH PROTEIN 2"/>
    <property type="match status" value="1"/>
</dbReference>
<dbReference type="PANTHER" id="PTHR46074">
    <property type="entry name" value="CYSTEINE-RICH PROTEIN CRIP FAMILY MEMBER"/>
    <property type="match status" value="1"/>
</dbReference>
<dbReference type="Pfam" id="PF00412">
    <property type="entry name" value="LIM"/>
    <property type="match status" value="2"/>
</dbReference>
<dbReference type="SMART" id="SM00132">
    <property type="entry name" value="LIM"/>
    <property type="match status" value="2"/>
</dbReference>
<dbReference type="SUPFAM" id="SSF57716">
    <property type="entry name" value="Glucocorticoid receptor-like (DNA-binding domain)"/>
    <property type="match status" value="4"/>
</dbReference>
<dbReference type="PROSITE" id="PS00478">
    <property type="entry name" value="LIM_DOMAIN_1"/>
    <property type="match status" value="2"/>
</dbReference>
<dbReference type="PROSITE" id="PS50023">
    <property type="entry name" value="LIM_DOMAIN_2"/>
    <property type="match status" value="2"/>
</dbReference>